<feature type="chain" id="PRO_1000213368" description="3-isopropylmalate dehydratase small subunit">
    <location>
        <begin position="1"/>
        <end position="165"/>
    </location>
</feature>
<dbReference type="EC" id="4.2.1.33" evidence="1"/>
<dbReference type="EMBL" id="CP001401">
    <property type="protein sequence ID" value="ACP54287.1"/>
    <property type="molecule type" value="Genomic_DNA"/>
</dbReference>
<dbReference type="RefSeq" id="WP_012718357.1">
    <property type="nucleotide sequence ID" value="NC_012632.1"/>
</dbReference>
<dbReference type="SMR" id="C3N1A2"/>
<dbReference type="KEGG" id="sim:M1627_0258"/>
<dbReference type="HOGENOM" id="CLU_081378_1_1_2"/>
<dbReference type="UniPathway" id="UPA00048">
    <property type="reaction ID" value="UER00071"/>
</dbReference>
<dbReference type="Proteomes" id="UP000002307">
    <property type="component" value="Chromosome"/>
</dbReference>
<dbReference type="GO" id="GO:0003861">
    <property type="term" value="F:3-isopropylmalate dehydratase activity"/>
    <property type="evidence" value="ECO:0007669"/>
    <property type="project" value="UniProtKB-UniRule"/>
</dbReference>
<dbReference type="GO" id="GO:0009098">
    <property type="term" value="P:L-leucine biosynthetic process"/>
    <property type="evidence" value="ECO:0007669"/>
    <property type="project" value="UniProtKB-UniRule"/>
</dbReference>
<dbReference type="CDD" id="cd01577">
    <property type="entry name" value="IPMI_Swivel"/>
    <property type="match status" value="1"/>
</dbReference>
<dbReference type="Gene3D" id="3.20.19.10">
    <property type="entry name" value="Aconitase, domain 4"/>
    <property type="match status" value="1"/>
</dbReference>
<dbReference type="HAMAP" id="MF_01032">
    <property type="entry name" value="LeuD_type2"/>
    <property type="match status" value="1"/>
</dbReference>
<dbReference type="InterPro" id="IPR015928">
    <property type="entry name" value="Aconitase/3IPM_dehydase_swvl"/>
</dbReference>
<dbReference type="InterPro" id="IPR000573">
    <property type="entry name" value="AconitaseA/IPMdHydase_ssu_swvl"/>
</dbReference>
<dbReference type="InterPro" id="IPR033940">
    <property type="entry name" value="IPMI_Swivel"/>
</dbReference>
<dbReference type="InterPro" id="IPR050075">
    <property type="entry name" value="LeuD"/>
</dbReference>
<dbReference type="InterPro" id="IPR011827">
    <property type="entry name" value="LeuD_type2/HacB/DmdB"/>
</dbReference>
<dbReference type="NCBIfam" id="TIGR02087">
    <property type="entry name" value="LEUD_arch"/>
    <property type="match status" value="1"/>
</dbReference>
<dbReference type="PANTHER" id="PTHR43345:SF2">
    <property type="entry name" value="3-ISOPROPYLMALATE DEHYDRATASE SMALL SUBUNIT 1"/>
    <property type="match status" value="1"/>
</dbReference>
<dbReference type="PANTHER" id="PTHR43345">
    <property type="entry name" value="3-ISOPROPYLMALATE DEHYDRATASE SMALL SUBUNIT 2-RELATED-RELATED"/>
    <property type="match status" value="1"/>
</dbReference>
<dbReference type="Pfam" id="PF00694">
    <property type="entry name" value="Aconitase_C"/>
    <property type="match status" value="1"/>
</dbReference>
<dbReference type="SUPFAM" id="SSF52016">
    <property type="entry name" value="LeuD/IlvD-like"/>
    <property type="match status" value="1"/>
</dbReference>
<organism>
    <name type="scientific">Saccharolobus islandicus (strain M.16.27)</name>
    <name type="common">Sulfolobus islandicus</name>
    <dbReference type="NCBI Taxonomy" id="427318"/>
    <lineage>
        <taxon>Archaea</taxon>
        <taxon>Thermoproteota</taxon>
        <taxon>Thermoprotei</taxon>
        <taxon>Sulfolobales</taxon>
        <taxon>Sulfolobaceae</taxon>
        <taxon>Saccharolobus</taxon>
    </lineage>
</organism>
<accession>C3N1A2</accession>
<protein>
    <recommendedName>
        <fullName evidence="1">3-isopropylmalate dehydratase small subunit</fullName>
        <ecNumber evidence="1">4.2.1.33</ecNumber>
    </recommendedName>
    <alternativeName>
        <fullName evidence="1">Alpha-IPM isomerase</fullName>
        <shortName evidence="1">IPMI</shortName>
    </alternativeName>
    <alternativeName>
        <fullName evidence="1">Isopropylmalate isomerase</fullName>
    </alternativeName>
</protein>
<name>LEUD_SACI3</name>
<gene>
    <name evidence="1" type="primary">leuD</name>
    <name type="ordered locus">M1627_0258</name>
</gene>
<reference key="1">
    <citation type="journal article" date="2009" name="Proc. Natl. Acad. Sci. U.S.A.">
        <title>Biogeography of the Sulfolobus islandicus pan-genome.</title>
        <authorList>
            <person name="Reno M.L."/>
            <person name="Held N.L."/>
            <person name="Fields C.J."/>
            <person name="Burke P.V."/>
            <person name="Whitaker R.J."/>
        </authorList>
    </citation>
    <scope>NUCLEOTIDE SEQUENCE [LARGE SCALE GENOMIC DNA]</scope>
    <source>
        <strain>M.16.27</strain>
    </source>
</reference>
<keyword id="KW-0028">Amino-acid biosynthesis</keyword>
<keyword id="KW-0100">Branched-chain amino acid biosynthesis</keyword>
<keyword id="KW-0432">Leucine biosynthesis</keyword>
<keyword id="KW-0456">Lyase</keyword>
<evidence type="ECO:0000255" key="1">
    <source>
        <dbReference type="HAMAP-Rule" id="MF_01032"/>
    </source>
</evidence>
<comment type="function">
    <text evidence="1">Catalyzes the isomerization between 2-isopropylmalate and 3-isopropylmalate, via the formation of 2-isopropylmaleate.</text>
</comment>
<comment type="catalytic activity">
    <reaction evidence="1">
        <text>(2R,3S)-3-isopropylmalate = (2S)-2-isopropylmalate</text>
        <dbReference type="Rhea" id="RHEA:32287"/>
        <dbReference type="ChEBI" id="CHEBI:1178"/>
        <dbReference type="ChEBI" id="CHEBI:35121"/>
        <dbReference type="EC" id="4.2.1.33"/>
    </reaction>
</comment>
<comment type="pathway">
    <text evidence="1">Amino-acid biosynthesis; L-leucine biosynthesis; L-leucine from 3-methyl-2-oxobutanoate: step 2/4.</text>
</comment>
<comment type="subunit">
    <text evidence="1">Heterodimer of LeuC and LeuD.</text>
</comment>
<comment type="similarity">
    <text evidence="1">Belongs to the LeuD family. LeuD type 2 subfamily.</text>
</comment>
<proteinExistence type="inferred from homology"/>
<sequence>MIIEGPVIKFGDKIDTDIIIPARYLKYTDPQYLAQHAMEPLDPEFYKKASKGVIIVAGKVFGMGSSREQAAIALKAAGVKAVVAESFARIFYRNAINNGLPVITLPNSTKEIDESSYVKIDVETGEILVGNKVLKGKGITGMALEILQAGGIMEYLKKMQTVNRN</sequence>